<name>MON1_EMENI</name>
<reference key="1">
    <citation type="journal article" date="2005" name="Nature">
        <title>Sequencing of Aspergillus nidulans and comparative analysis with A. fumigatus and A. oryzae.</title>
        <authorList>
            <person name="Galagan J.E."/>
            <person name="Calvo S.E."/>
            <person name="Cuomo C."/>
            <person name="Ma L.-J."/>
            <person name="Wortman J.R."/>
            <person name="Batzoglou S."/>
            <person name="Lee S.-I."/>
            <person name="Bastuerkmen M."/>
            <person name="Spevak C.C."/>
            <person name="Clutterbuck J."/>
            <person name="Kapitonov V."/>
            <person name="Jurka J."/>
            <person name="Scazzocchio C."/>
            <person name="Farman M.L."/>
            <person name="Butler J."/>
            <person name="Purcell S."/>
            <person name="Harris S."/>
            <person name="Braus G.H."/>
            <person name="Draht O."/>
            <person name="Busch S."/>
            <person name="D'Enfert C."/>
            <person name="Bouchier C."/>
            <person name="Goldman G.H."/>
            <person name="Bell-Pedersen D."/>
            <person name="Griffiths-Jones S."/>
            <person name="Doonan J.H."/>
            <person name="Yu J."/>
            <person name="Vienken K."/>
            <person name="Pain A."/>
            <person name="Freitag M."/>
            <person name="Selker E.U."/>
            <person name="Archer D.B."/>
            <person name="Penalva M.A."/>
            <person name="Oakley B.R."/>
            <person name="Momany M."/>
            <person name="Tanaka T."/>
            <person name="Kumagai T."/>
            <person name="Asai K."/>
            <person name="Machida M."/>
            <person name="Nierman W.C."/>
            <person name="Denning D.W."/>
            <person name="Caddick M.X."/>
            <person name="Hynes M."/>
            <person name="Paoletti M."/>
            <person name="Fischer R."/>
            <person name="Miller B.L."/>
            <person name="Dyer P.S."/>
            <person name="Sachs M.S."/>
            <person name="Osmani S.A."/>
            <person name="Birren B.W."/>
        </authorList>
    </citation>
    <scope>NUCLEOTIDE SEQUENCE [LARGE SCALE GENOMIC DNA]</scope>
    <source>
        <strain>FGSC A4 / ATCC 38163 / CBS 112.46 / NRRL 194 / M139</strain>
    </source>
</reference>
<reference key="2">
    <citation type="journal article" date="2009" name="Fungal Genet. Biol.">
        <title>The 2008 update of the Aspergillus nidulans genome annotation: a community effort.</title>
        <authorList>
            <person name="Wortman J.R."/>
            <person name="Gilsenan J.M."/>
            <person name="Joardar V."/>
            <person name="Deegan J."/>
            <person name="Clutterbuck J."/>
            <person name="Andersen M.R."/>
            <person name="Archer D."/>
            <person name="Bencina M."/>
            <person name="Braus G."/>
            <person name="Coutinho P."/>
            <person name="von Dohren H."/>
            <person name="Doonan J."/>
            <person name="Driessen A.J."/>
            <person name="Durek P."/>
            <person name="Espeso E."/>
            <person name="Fekete E."/>
            <person name="Flipphi M."/>
            <person name="Estrada C.G."/>
            <person name="Geysens S."/>
            <person name="Goldman G."/>
            <person name="de Groot P.W."/>
            <person name="Hansen K."/>
            <person name="Harris S.D."/>
            <person name="Heinekamp T."/>
            <person name="Helmstaedt K."/>
            <person name="Henrissat B."/>
            <person name="Hofmann G."/>
            <person name="Homan T."/>
            <person name="Horio T."/>
            <person name="Horiuchi H."/>
            <person name="James S."/>
            <person name="Jones M."/>
            <person name="Karaffa L."/>
            <person name="Karanyi Z."/>
            <person name="Kato M."/>
            <person name="Keller N."/>
            <person name="Kelly D.E."/>
            <person name="Kiel J.A."/>
            <person name="Kim J.M."/>
            <person name="van der Klei I.J."/>
            <person name="Klis F.M."/>
            <person name="Kovalchuk A."/>
            <person name="Krasevec N."/>
            <person name="Kubicek C.P."/>
            <person name="Liu B."/>
            <person name="Maccabe A."/>
            <person name="Meyer V."/>
            <person name="Mirabito P."/>
            <person name="Miskei M."/>
            <person name="Mos M."/>
            <person name="Mullins J."/>
            <person name="Nelson D.R."/>
            <person name="Nielsen J."/>
            <person name="Oakley B.R."/>
            <person name="Osmani S.A."/>
            <person name="Pakula T."/>
            <person name="Paszewski A."/>
            <person name="Paulsen I."/>
            <person name="Pilsyk S."/>
            <person name="Pocsi I."/>
            <person name="Punt P.J."/>
            <person name="Ram A.F."/>
            <person name="Ren Q."/>
            <person name="Robellet X."/>
            <person name="Robson G."/>
            <person name="Seiboth B."/>
            <person name="van Solingen P."/>
            <person name="Specht T."/>
            <person name="Sun J."/>
            <person name="Taheri-Talesh N."/>
            <person name="Takeshita N."/>
            <person name="Ussery D."/>
            <person name="vanKuyk P.A."/>
            <person name="Visser H."/>
            <person name="van de Vondervoort P.J."/>
            <person name="de Vries R.P."/>
            <person name="Walton J."/>
            <person name="Xiang X."/>
            <person name="Xiong Y."/>
            <person name="Zeng A.P."/>
            <person name="Brandt B.W."/>
            <person name="Cornell M.J."/>
            <person name="van den Hondel C.A."/>
            <person name="Visser J."/>
            <person name="Oliver S.G."/>
            <person name="Turner G."/>
        </authorList>
    </citation>
    <scope>GENOME REANNOTATION</scope>
    <source>
        <strain>FGSC A4 / ATCC 38163 / CBS 112.46 / NRRL 194 / M139</strain>
    </source>
</reference>
<feature type="chain" id="PRO_0000278861" description="Vacuolar fusion protein mon1">
    <location>
        <begin position="1"/>
        <end position="614"/>
    </location>
</feature>
<feature type="region of interest" description="Disordered" evidence="3">
    <location>
        <begin position="1"/>
        <end position="81"/>
    </location>
</feature>
<feature type="compositionally biased region" description="Polar residues" evidence="3">
    <location>
        <begin position="1"/>
        <end position="11"/>
    </location>
</feature>
<feature type="compositionally biased region" description="Pro residues" evidence="3">
    <location>
        <begin position="46"/>
        <end position="55"/>
    </location>
</feature>
<dbReference type="EMBL" id="AACD01000032">
    <property type="protein sequence ID" value="EAA64925.1"/>
    <property type="molecule type" value="Genomic_DNA"/>
</dbReference>
<dbReference type="EMBL" id="BN001307">
    <property type="protein sequence ID" value="CBF86164.1"/>
    <property type="status" value="ALT_SEQ"/>
    <property type="molecule type" value="Genomic_DNA"/>
</dbReference>
<dbReference type="RefSeq" id="XP_659697.1">
    <property type="nucleotide sequence ID" value="XM_654605.1"/>
</dbReference>
<dbReference type="SMR" id="Q5BBI7"/>
<dbReference type="FunCoup" id="Q5BBI7">
    <property type="interactions" value="547"/>
</dbReference>
<dbReference type="STRING" id="227321.Q5BBI7"/>
<dbReference type="eggNOG" id="KOG0997">
    <property type="taxonomic scope" value="Eukaryota"/>
</dbReference>
<dbReference type="HOGENOM" id="CLU_014574_5_0_1"/>
<dbReference type="InParanoid" id="Q5BBI7"/>
<dbReference type="Proteomes" id="UP000000560">
    <property type="component" value="Chromosome VII"/>
</dbReference>
<dbReference type="GO" id="GO:0000329">
    <property type="term" value="C:fungal-type vacuole membrane"/>
    <property type="evidence" value="ECO:0000318"/>
    <property type="project" value="GO_Central"/>
</dbReference>
<dbReference type="GO" id="GO:0035658">
    <property type="term" value="C:Mon1-Ccz1 complex"/>
    <property type="evidence" value="ECO:0000318"/>
    <property type="project" value="GO_Central"/>
</dbReference>
<dbReference type="GO" id="GO:0032585">
    <property type="term" value="C:multivesicular body membrane"/>
    <property type="evidence" value="ECO:0007669"/>
    <property type="project" value="UniProtKB-SubCell"/>
</dbReference>
<dbReference type="GO" id="GO:0006914">
    <property type="term" value="P:autophagy"/>
    <property type="evidence" value="ECO:0007669"/>
    <property type="project" value="UniProtKB-KW"/>
</dbReference>
<dbReference type="GO" id="GO:0006623">
    <property type="term" value="P:protein targeting to vacuole"/>
    <property type="evidence" value="ECO:0000318"/>
    <property type="project" value="GO_Central"/>
</dbReference>
<dbReference type="GO" id="GO:0016192">
    <property type="term" value="P:vesicle-mediated transport"/>
    <property type="evidence" value="ECO:0007669"/>
    <property type="project" value="InterPro"/>
</dbReference>
<dbReference type="InterPro" id="IPR043972">
    <property type="entry name" value="FUZ/MON1/HPS1_longin_1"/>
</dbReference>
<dbReference type="InterPro" id="IPR043971">
    <property type="entry name" value="FUZ/MON1/HPS1_longin_2"/>
</dbReference>
<dbReference type="InterPro" id="IPR043970">
    <property type="entry name" value="FUZ/MON1/HPS1_longin_3"/>
</dbReference>
<dbReference type="InterPro" id="IPR004353">
    <property type="entry name" value="Mon1"/>
</dbReference>
<dbReference type="PANTHER" id="PTHR13027">
    <property type="entry name" value="SAND PROTEIN-RELATED"/>
    <property type="match status" value="1"/>
</dbReference>
<dbReference type="PANTHER" id="PTHR13027:SF7">
    <property type="entry name" value="VACUOLAR FUSION PROTEIN MON1 HOMOLOG"/>
    <property type="match status" value="1"/>
</dbReference>
<dbReference type="Pfam" id="PF19036">
    <property type="entry name" value="Fuz_longin_1"/>
    <property type="match status" value="1"/>
</dbReference>
<dbReference type="Pfam" id="PF19037">
    <property type="entry name" value="Fuz_longin_2"/>
    <property type="match status" value="1"/>
</dbReference>
<dbReference type="Pfam" id="PF19038">
    <property type="entry name" value="Fuz_longin_3"/>
    <property type="match status" value="1"/>
</dbReference>
<dbReference type="PRINTS" id="PR01546">
    <property type="entry name" value="YEAST73DUF"/>
</dbReference>
<gene>
    <name type="primary">mon1</name>
    <name type="ORF">AN2093</name>
</gene>
<accession>Q5BBI7</accession>
<accession>C8VLX1</accession>
<evidence type="ECO:0000250" key="1"/>
<evidence type="ECO:0000250" key="2">
    <source>
        <dbReference type="UniProtKB" id="P53129"/>
    </source>
</evidence>
<evidence type="ECO:0000256" key="3">
    <source>
        <dbReference type="SAM" id="MobiDB-lite"/>
    </source>
</evidence>
<evidence type="ECO:0000305" key="4"/>
<organism>
    <name type="scientific">Emericella nidulans (strain FGSC A4 / ATCC 38163 / CBS 112.46 / NRRL 194 / M139)</name>
    <name type="common">Aspergillus nidulans</name>
    <dbReference type="NCBI Taxonomy" id="227321"/>
    <lineage>
        <taxon>Eukaryota</taxon>
        <taxon>Fungi</taxon>
        <taxon>Dikarya</taxon>
        <taxon>Ascomycota</taxon>
        <taxon>Pezizomycotina</taxon>
        <taxon>Eurotiomycetes</taxon>
        <taxon>Eurotiomycetidae</taxon>
        <taxon>Eurotiales</taxon>
        <taxon>Aspergillaceae</taxon>
        <taxon>Aspergillus</taxon>
        <taxon>Aspergillus subgen. Nidulantes</taxon>
    </lineage>
</organism>
<protein>
    <recommendedName>
        <fullName>Vacuolar fusion protein mon1</fullName>
    </recommendedName>
</protein>
<proteinExistence type="inferred from homology"/>
<keyword id="KW-0072">Autophagy</keyword>
<keyword id="KW-0967">Endosome</keyword>
<keyword id="KW-0472">Membrane</keyword>
<keyword id="KW-0653">Protein transport</keyword>
<keyword id="KW-1185">Reference proteome</keyword>
<keyword id="KW-0813">Transport</keyword>
<keyword id="KW-0926">Vacuole</keyword>
<comment type="function">
    <text evidence="2">In complex with CCZ1, is required for multiple vacuole delivery pathways including the cytoplasm to vacuole transport (Cvt), autophagy, pexophagy and endocytosis. The MON1-CCZ1 complex acts at the fusion of vesicles with the vacuole, through its regulation of the SNARE complex during the coordinated priming and docking stages of fusion, and particularly at the stage of tethering/docking.</text>
</comment>
<comment type="subcellular location">
    <subcellularLocation>
        <location evidence="1">Endosome</location>
        <location evidence="1">Multivesicular body membrane</location>
        <topology evidence="1">Peripheral membrane protein</topology>
    </subcellularLocation>
    <subcellularLocation>
        <location evidence="1">Prevacuolar compartment membrane</location>
        <topology evidence="1">Peripheral membrane protein</topology>
    </subcellularLocation>
    <subcellularLocation>
        <location evidence="1">Vacuole membrane</location>
        <topology evidence="1">Peripheral membrane protein</topology>
    </subcellularLocation>
</comment>
<comment type="similarity">
    <text evidence="4">Belongs to the MON1/SAND family.</text>
</comment>
<comment type="sequence caution" evidence="4">
    <conflict type="erroneous gene model prediction">
        <sequence resource="EMBL-CDS" id="CBF86164"/>
    </conflict>
</comment>
<sequence>MDTKDSNSSQALAIDGGAQTRPTDDHASLTKRLTQPRSDRSQSPEGRPPPLPPRPETLILLEDGGAAPGTPRPNVSAVHPGLQSRATTAVSLAEISQNDRGKDALAVRSFPGTVRAKASLSHLATPKDGSDAGDSASVTSYVPYSESGDVENIFGSLASSEVGIAQEESTGLMQFPEFQADDVEDDFASELEPVGEIGEGGENEGTVLAYGSTTAETDQLIDLVLEKWKAKRKHYIILSAAGKPIWTRHGDGGLISTYVGIIQTIISSYEDSNDRLNGFTAGDTKFTVVAKGPLYLVAISRILESDTQLKLQLEALYMQILSTLTLPALTHLFSVRPSTDLKRPLQGSETLLSTLADSFTKGSPSTLLSALECLKIRKSHRQTINNTLLKTKVSKLLYGLVVAGGRLVSVVRPKKHSLHPGDLQLLFNMIFEAEAVKAGGGESWIPVCLPGFNSSGYLYIFFELQAMKNALVEKLEENGSINNIKEAIDKGRPSTTDIVPGSVLHHFVYKSRVNVQFIMSAYDPEFSTITRRRRLISTYNNLHASVHAKHTHVKVHHCVTQSSSSFAWITPVFELYCVAGPHANRNALAQSASKVVQWVQKEEERLFIISGAVF</sequence>